<comment type="catalytic activity">
    <reaction evidence="1">
        <text>L-homoserine + ATP = O-phospho-L-homoserine + ADP + H(+)</text>
        <dbReference type="Rhea" id="RHEA:13985"/>
        <dbReference type="ChEBI" id="CHEBI:15378"/>
        <dbReference type="ChEBI" id="CHEBI:30616"/>
        <dbReference type="ChEBI" id="CHEBI:57476"/>
        <dbReference type="ChEBI" id="CHEBI:57590"/>
        <dbReference type="ChEBI" id="CHEBI:456216"/>
        <dbReference type="EC" id="2.7.1.39"/>
    </reaction>
</comment>
<comment type="pathway">
    <text evidence="1">Amino-acid biosynthesis; L-threonine biosynthesis; L-threonine from L-aspartate: step 4/5.</text>
</comment>
<comment type="similarity">
    <text evidence="1">Belongs to the pseudomonas-type ThrB family.</text>
</comment>
<comment type="sequence caution" evidence="2">
    <conflict type="erroneous initiation">
        <sequence resource="EMBL-CDS" id="ABM49441"/>
    </conflict>
</comment>
<organism>
    <name type="scientific">Burkholderia mallei (strain SAVP1)</name>
    <dbReference type="NCBI Taxonomy" id="320388"/>
    <lineage>
        <taxon>Bacteria</taxon>
        <taxon>Pseudomonadati</taxon>
        <taxon>Pseudomonadota</taxon>
        <taxon>Betaproteobacteria</taxon>
        <taxon>Burkholderiales</taxon>
        <taxon>Burkholderiaceae</taxon>
        <taxon>Burkholderia</taxon>
        <taxon>pseudomallei group</taxon>
    </lineage>
</organism>
<protein>
    <recommendedName>
        <fullName evidence="1">Homoserine kinase</fullName>
        <shortName evidence="1">HK</shortName>
        <shortName evidence="1">HSK</shortName>
        <ecNumber evidence="1">2.7.1.39</ecNumber>
    </recommendedName>
</protein>
<evidence type="ECO:0000255" key="1">
    <source>
        <dbReference type="HAMAP-Rule" id="MF_00301"/>
    </source>
</evidence>
<evidence type="ECO:0000305" key="2"/>
<name>KHSE_BURMS</name>
<sequence>MAVFTAVSDADLALWMRHYDLGDVVAFRGIPSGIENSNFFLTTTRGEYVLTIFENLTAGQLPFYVDLMSHLAKHGVPVPAPVARDDGTLFGELHGKPAAIVTKLEGAAQLAPGVEHCVEVGQMLARMHLAGRDYPRHQPNLRSLPWWRDTVPAIAPFVTGEQRALLEGELAHQAAFFASDDYAALPEGPCHCDLFRDNALFAHAEPDTGHSVRLGGFFDFYFAGCDKWLFDVAVTVNDWCVDLPTGALDAARADALLRAYQTVRPFTAGERRRWGDMLRAGAYRFWVSRLYDFHLPRAAQMLKPHDPGHFERILRERIAHAGALPETHACN</sequence>
<keyword id="KW-0028">Amino-acid biosynthesis</keyword>
<keyword id="KW-0067">ATP-binding</keyword>
<keyword id="KW-0418">Kinase</keyword>
<keyword id="KW-0547">Nucleotide-binding</keyword>
<keyword id="KW-0791">Threonine biosynthesis</keyword>
<keyword id="KW-0808">Transferase</keyword>
<accession>A1UYM9</accession>
<feature type="chain" id="PRO_0000322238" description="Homoserine kinase">
    <location>
        <begin position="1"/>
        <end position="331"/>
    </location>
</feature>
<gene>
    <name evidence="1" type="primary">thrB</name>
    <name type="ordered locus">BMASAVP1_1486</name>
</gene>
<reference key="1">
    <citation type="journal article" date="2010" name="Genome Biol. Evol.">
        <title>Continuing evolution of Burkholderia mallei through genome reduction and large-scale rearrangements.</title>
        <authorList>
            <person name="Losada L."/>
            <person name="Ronning C.M."/>
            <person name="DeShazer D."/>
            <person name="Woods D."/>
            <person name="Fedorova N."/>
            <person name="Kim H.S."/>
            <person name="Shabalina S.A."/>
            <person name="Pearson T.R."/>
            <person name="Brinkac L."/>
            <person name="Tan P."/>
            <person name="Nandi T."/>
            <person name="Crabtree J."/>
            <person name="Badger J."/>
            <person name="Beckstrom-Sternberg S."/>
            <person name="Saqib M."/>
            <person name="Schutzer S.E."/>
            <person name="Keim P."/>
            <person name="Nierman W.C."/>
        </authorList>
    </citation>
    <scope>NUCLEOTIDE SEQUENCE [LARGE SCALE GENOMIC DNA]</scope>
    <source>
        <strain>SAVP1</strain>
    </source>
</reference>
<dbReference type="EC" id="2.7.1.39" evidence="1"/>
<dbReference type="EMBL" id="CP000525">
    <property type="protein sequence ID" value="ABM49441.1"/>
    <property type="status" value="ALT_INIT"/>
    <property type="molecule type" value="Genomic_DNA"/>
</dbReference>
<dbReference type="RefSeq" id="WP_004190439.1">
    <property type="nucleotide sequence ID" value="NC_008784.1"/>
</dbReference>
<dbReference type="SMR" id="A1UYM9"/>
<dbReference type="KEGG" id="bmv:BMASAVP1_1486"/>
<dbReference type="HOGENOM" id="CLU_053300_0_0_4"/>
<dbReference type="UniPathway" id="UPA00050">
    <property type="reaction ID" value="UER00064"/>
</dbReference>
<dbReference type="GO" id="GO:0005524">
    <property type="term" value="F:ATP binding"/>
    <property type="evidence" value="ECO:0007669"/>
    <property type="project" value="UniProtKB-KW"/>
</dbReference>
<dbReference type="GO" id="GO:0004413">
    <property type="term" value="F:homoserine kinase activity"/>
    <property type="evidence" value="ECO:0007669"/>
    <property type="project" value="UniProtKB-UniRule"/>
</dbReference>
<dbReference type="GO" id="GO:0009088">
    <property type="term" value="P:threonine biosynthetic process"/>
    <property type="evidence" value="ECO:0007669"/>
    <property type="project" value="UniProtKB-UniRule"/>
</dbReference>
<dbReference type="CDD" id="cd05153">
    <property type="entry name" value="HomoserineK_II"/>
    <property type="match status" value="1"/>
</dbReference>
<dbReference type="Gene3D" id="3.90.1200.10">
    <property type="match status" value="1"/>
</dbReference>
<dbReference type="Gene3D" id="3.30.200.20">
    <property type="entry name" value="Phosphorylase Kinase, domain 1"/>
    <property type="match status" value="1"/>
</dbReference>
<dbReference type="HAMAP" id="MF_00301">
    <property type="entry name" value="Homoser_kinase_2"/>
    <property type="match status" value="1"/>
</dbReference>
<dbReference type="InterPro" id="IPR002575">
    <property type="entry name" value="Aminoglycoside_PTrfase"/>
</dbReference>
<dbReference type="InterPro" id="IPR005280">
    <property type="entry name" value="Homoserine_kinase_II"/>
</dbReference>
<dbReference type="InterPro" id="IPR011009">
    <property type="entry name" value="Kinase-like_dom_sf"/>
</dbReference>
<dbReference type="InterPro" id="IPR050249">
    <property type="entry name" value="Pseudomonas-type_ThrB"/>
</dbReference>
<dbReference type="NCBIfam" id="NF003558">
    <property type="entry name" value="PRK05231.1"/>
    <property type="match status" value="1"/>
</dbReference>
<dbReference type="NCBIfam" id="TIGR00938">
    <property type="entry name" value="thrB_alt"/>
    <property type="match status" value="1"/>
</dbReference>
<dbReference type="PANTHER" id="PTHR21064:SF6">
    <property type="entry name" value="AMINOGLYCOSIDE PHOSPHOTRANSFERASE DOMAIN-CONTAINING PROTEIN"/>
    <property type="match status" value="1"/>
</dbReference>
<dbReference type="PANTHER" id="PTHR21064">
    <property type="entry name" value="AMINOGLYCOSIDE PHOSPHOTRANSFERASE DOMAIN-CONTAINING PROTEIN-RELATED"/>
    <property type="match status" value="1"/>
</dbReference>
<dbReference type="Pfam" id="PF01636">
    <property type="entry name" value="APH"/>
    <property type="match status" value="1"/>
</dbReference>
<dbReference type="SUPFAM" id="SSF56112">
    <property type="entry name" value="Protein kinase-like (PK-like)"/>
    <property type="match status" value="1"/>
</dbReference>
<proteinExistence type="inferred from homology"/>